<sequence>MKPDAHHVKQFLLRLQDDICQTLSAVDGANFIEDSWRREAGGGGRSRVLRNGGIFEQAGVNFSHVHGDAMPASATAHRPELAGRSFEAMGVSLVVHPHNPYIPTSHANVRFFIAEKPGADPVWWFGGGFDLTPYYGFEEDAVHWHRTARDLCQPFGDDVYPRYKKWCDDYFFLKHRNEQRGIGGLFFDDLNTPDFDHCFAFMQAVGNGYTEAYLPIVERRKAMVWGERERNFQLYRRGRYVEFNLVWDRGTLFGLQTGGRTESILMSMPPLVRWEYDWQPEAGSPEAALSEFIQVRDWI</sequence>
<comment type="function">
    <text evidence="1">Involved in the heme biosynthesis. Catalyzes the aerobic oxidative decarboxylation of propionate groups of rings A and B of coproporphyrinogen-III to yield the vinyl groups in protoporphyrinogen-IX.</text>
</comment>
<comment type="catalytic activity">
    <reaction evidence="1">
        <text>coproporphyrinogen III + O2 + 2 H(+) = protoporphyrinogen IX + 2 CO2 + 2 H2O</text>
        <dbReference type="Rhea" id="RHEA:18257"/>
        <dbReference type="ChEBI" id="CHEBI:15377"/>
        <dbReference type="ChEBI" id="CHEBI:15378"/>
        <dbReference type="ChEBI" id="CHEBI:15379"/>
        <dbReference type="ChEBI" id="CHEBI:16526"/>
        <dbReference type="ChEBI" id="CHEBI:57307"/>
        <dbReference type="ChEBI" id="CHEBI:57309"/>
        <dbReference type="EC" id="1.3.3.3"/>
    </reaction>
</comment>
<comment type="cofactor">
    <cofactor evidence="1">
        <name>a divalent metal cation</name>
        <dbReference type="ChEBI" id="CHEBI:60240"/>
    </cofactor>
</comment>
<comment type="pathway">
    <text evidence="1">Porphyrin-containing compound metabolism; protoporphyrin-IX biosynthesis; protoporphyrinogen-IX from coproporphyrinogen-III (O2 route): step 1/1.</text>
</comment>
<comment type="subunit">
    <text evidence="1">Homodimer.</text>
</comment>
<comment type="subcellular location">
    <subcellularLocation>
        <location evidence="1">Cytoplasm</location>
    </subcellularLocation>
</comment>
<comment type="similarity">
    <text evidence="1">Belongs to the aerobic coproporphyrinogen-III oxidase family.</text>
</comment>
<proteinExistence type="inferred from homology"/>
<evidence type="ECO:0000255" key="1">
    <source>
        <dbReference type="HAMAP-Rule" id="MF_00333"/>
    </source>
</evidence>
<accession>Q8Z4U8</accession>
<protein>
    <recommendedName>
        <fullName evidence="1">Oxygen-dependent coproporphyrinogen-III oxidase</fullName>
        <shortName evidence="1">CPO</shortName>
        <shortName evidence="1">Coprogen oxidase</shortName>
        <shortName evidence="1">Coproporphyrinogenase</shortName>
        <ecNumber evidence="1">1.3.3.3</ecNumber>
    </recommendedName>
</protein>
<feature type="chain" id="PRO_0000109918" description="Oxygen-dependent coproporphyrinogen-III oxidase">
    <location>
        <begin position="1"/>
        <end position="299"/>
    </location>
</feature>
<feature type="region of interest" description="Important for dimerization" evidence="1">
    <location>
        <begin position="240"/>
        <end position="275"/>
    </location>
</feature>
<feature type="active site" description="Proton donor" evidence="1">
    <location>
        <position position="106"/>
    </location>
</feature>
<feature type="binding site" evidence="1">
    <location>
        <position position="92"/>
    </location>
    <ligand>
        <name>substrate</name>
    </ligand>
</feature>
<feature type="binding site" evidence="1">
    <location>
        <position position="96"/>
    </location>
    <ligand>
        <name>a divalent metal cation</name>
        <dbReference type="ChEBI" id="CHEBI:60240"/>
    </ligand>
</feature>
<feature type="binding site" evidence="1">
    <location>
        <position position="106"/>
    </location>
    <ligand>
        <name>a divalent metal cation</name>
        <dbReference type="ChEBI" id="CHEBI:60240"/>
    </ligand>
</feature>
<feature type="binding site" evidence="1">
    <location>
        <begin position="108"/>
        <end position="110"/>
    </location>
    <ligand>
        <name>substrate</name>
    </ligand>
</feature>
<feature type="binding site" evidence="1">
    <location>
        <position position="145"/>
    </location>
    <ligand>
        <name>a divalent metal cation</name>
        <dbReference type="ChEBI" id="CHEBI:60240"/>
    </ligand>
</feature>
<feature type="binding site" evidence="1">
    <location>
        <position position="175"/>
    </location>
    <ligand>
        <name>a divalent metal cation</name>
        <dbReference type="ChEBI" id="CHEBI:60240"/>
    </ligand>
</feature>
<feature type="binding site" evidence="1">
    <location>
        <begin position="258"/>
        <end position="260"/>
    </location>
    <ligand>
        <name>substrate</name>
    </ligand>
</feature>
<feature type="site" description="Important for dimerization" evidence="1">
    <location>
        <position position="175"/>
    </location>
</feature>
<gene>
    <name evidence="1" type="primary">hemF</name>
    <name type="ordered locus">STY2688</name>
    <name type="ordered locus">t0407</name>
</gene>
<keyword id="KW-0963">Cytoplasm</keyword>
<keyword id="KW-0350">Heme biosynthesis</keyword>
<keyword id="KW-0479">Metal-binding</keyword>
<keyword id="KW-0560">Oxidoreductase</keyword>
<keyword id="KW-0627">Porphyrin biosynthesis</keyword>
<reference key="1">
    <citation type="journal article" date="2001" name="Nature">
        <title>Complete genome sequence of a multiple drug resistant Salmonella enterica serovar Typhi CT18.</title>
        <authorList>
            <person name="Parkhill J."/>
            <person name="Dougan G."/>
            <person name="James K.D."/>
            <person name="Thomson N.R."/>
            <person name="Pickard D."/>
            <person name="Wain J."/>
            <person name="Churcher C.M."/>
            <person name="Mungall K.L."/>
            <person name="Bentley S.D."/>
            <person name="Holden M.T.G."/>
            <person name="Sebaihia M."/>
            <person name="Baker S."/>
            <person name="Basham D."/>
            <person name="Brooks K."/>
            <person name="Chillingworth T."/>
            <person name="Connerton P."/>
            <person name="Cronin A."/>
            <person name="Davis P."/>
            <person name="Davies R.M."/>
            <person name="Dowd L."/>
            <person name="White N."/>
            <person name="Farrar J."/>
            <person name="Feltwell T."/>
            <person name="Hamlin N."/>
            <person name="Haque A."/>
            <person name="Hien T.T."/>
            <person name="Holroyd S."/>
            <person name="Jagels K."/>
            <person name="Krogh A."/>
            <person name="Larsen T.S."/>
            <person name="Leather S."/>
            <person name="Moule S."/>
            <person name="O'Gaora P."/>
            <person name="Parry C."/>
            <person name="Quail M.A."/>
            <person name="Rutherford K.M."/>
            <person name="Simmonds M."/>
            <person name="Skelton J."/>
            <person name="Stevens K."/>
            <person name="Whitehead S."/>
            <person name="Barrell B.G."/>
        </authorList>
    </citation>
    <scope>NUCLEOTIDE SEQUENCE [LARGE SCALE GENOMIC DNA]</scope>
    <source>
        <strain>CT18</strain>
    </source>
</reference>
<reference key="2">
    <citation type="journal article" date="2003" name="J. Bacteriol.">
        <title>Comparative genomics of Salmonella enterica serovar Typhi strains Ty2 and CT18.</title>
        <authorList>
            <person name="Deng W."/>
            <person name="Liou S.-R."/>
            <person name="Plunkett G. III"/>
            <person name="Mayhew G.F."/>
            <person name="Rose D.J."/>
            <person name="Burland V."/>
            <person name="Kodoyianni V."/>
            <person name="Schwartz D.C."/>
            <person name="Blattner F.R."/>
        </authorList>
    </citation>
    <scope>NUCLEOTIDE SEQUENCE [LARGE SCALE GENOMIC DNA]</scope>
    <source>
        <strain>ATCC 700931 / Ty2</strain>
    </source>
</reference>
<dbReference type="EC" id="1.3.3.3" evidence="1"/>
<dbReference type="EMBL" id="AL513382">
    <property type="protein sequence ID" value="CAD07682.1"/>
    <property type="molecule type" value="Genomic_DNA"/>
</dbReference>
<dbReference type="EMBL" id="AE014613">
    <property type="protein sequence ID" value="AAO68125.1"/>
    <property type="molecule type" value="Genomic_DNA"/>
</dbReference>
<dbReference type="RefSeq" id="NP_456986.1">
    <property type="nucleotide sequence ID" value="NC_003198.1"/>
</dbReference>
<dbReference type="RefSeq" id="WP_000801336.1">
    <property type="nucleotide sequence ID" value="NZ_WSUR01000025.1"/>
</dbReference>
<dbReference type="SMR" id="Q8Z4U8"/>
<dbReference type="STRING" id="220341.gene:17586586"/>
<dbReference type="KEGG" id="stt:t0407"/>
<dbReference type="KEGG" id="sty:STY2688"/>
<dbReference type="PATRIC" id="fig|220341.7.peg.2725"/>
<dbReference type="eggNOG" id="COG0408">
    <property type="taxonomic scope" value="Bacteria"/>
</dbReference>
<dbReference type="HOGENOM" id="CLU_026169_0_1_6"/>
<dbReference type="OMA" id="VHANWRY"/>
<dbReference type="OrthoDB" id="9777553at2"/>
<dbReference type="UniPathway" id="UPA00251">
    <property type="reaction ID" value="UER00322"/>
</dbReference>
<dbReference type="Proteomes" id="UP000000541">
    <property type="component" value="Chromosome"/>
</dbReference>
<dbReference type="Proteomes" id="UP000002670">
    <property type="component" value="Chromosome"/>
</dbReference>
<dbReference type="GO" id="GO:0005737">
    <property type="term" value="C:cytoplasm"/>
    <property type="evidence" value="ECO:0007669"/>
    <property type="project" value="UniProtKB-SubCell"/>
</dbReference>
<dbReference type="GO" id="GO:0004109">
    <property type="term" value="F:coproporphyrinogen oxidase activity"/>
    <property type="evidence" value="ECO:0007669"/>
    <property type="project" value="UniProtKB-UniRule"/>
</dbReference>
<dbReference type="GO" id="GO:0046872">
    <property type="term" value="F:metal ion binding"/>
    <property type="evidence" value="ECO:0007669"/>
    <property type="project" value="UniProtKB-KW"/>
</dbReference>
<dbReference type="GO" id="GO:0042803">
    <property type="term" value="F:protein homodimerization activity"/>
    <property type="evidence" value="ECO:0000250"/>
    <property type="project" value="UniProtKB"/>
</dbReference>
<dbReference type="GO" id="GO:0006782">
    <property type="term" value="P:protoporphyrinogen IX biosynthetic process"/>
    <property type="evidence" value="ECO:0007669"/>
    <property type="project" value="UniProtKB-UniRule"/>
</dbReference>
<dbReference type="FunFam" id="3.40.1500.10:FF:000001">
    <property type="entry name" value="Oxygen-dependent coproporphyrinogen-III oxidase"/>
    <property type="match status" value="1"/>
</dbReference>
<dbReference type="Gene3D" id="3.40.1500.10">
    <property type="entry name" value="Coproporphyrinogen III oxidase, aerobic"/>
    <property type="match status" value="1"/>
</dbReference>
<dbReference type="HAMAP" id="MF_00333">
    <property type="entry name" value="Coprogen_oxidas"/>
    <property type="match status" value="1"/>
</dbReference>
<dbReference type="InterPro" id="IPR001260">
    <property type="entry name" value="Coprogen_oxidase_aer"/>
</dbReference>
<dbReference type="InterPro" id="IPR036406">
    <property type="entry name" value="Coprogen_oxidase_aer_sf"/>
</dbReference>
<dbReference type="InterPro" id="IPR018375">
    <property type="entry name" value="Coprogen_oxidase_CS"/>
</dbReference>
<dbReference type="NCBIfam" id="NF003727">
    <property type="entry name" value="PRK05330.1"/>
    <property type="match status" value="1"/>
</dbReference>
<dbReference type="PANTHER" id="PTHR10755">
    <property type="entry name" value="COPROPORPHYRINOGEN III OXIDASE, MITOCHONDRIAL"/>
    <property type="match status" value="1"/>
</dbReference>
<dbReference type="PANTHER" id="PTHR10755:SF0">
    <property type="entry name" value="OXYGEN-DEPENDENT COPROPORPHYRINOGEN-III OXIDASE, MITOCHONDRIAL"/>
    <property type="match status" value="1"/>
</dbReference>
<dbReference type="Pfam" id="PF01218">
    <property type="entry name" value="Coprogen_oxidas"/>
    <property type="match status" value="1"/>
</dbReference>
<dbReference type="PIRSF" id="PIRSF000166">
    <property type="entry name" value="Coproporphyri_ox"/>
    <property type="match status" value="1"/>
</dbReference>
<dbReference type="PRINTS" id="PR00073">
    <property type="entry name" value="COPRGNOXDASE"/>
</dbReference>
<dbReference type="SUPFAM" id="SSF102886">
    <property type="entry name" value="Coproporphyrinogen III oxidase"/>
    <property type="match status" value="1"/>
</dbReference>
<dbReference type="PROSITE" id="PS01021">
    <property type="entry name" value="COPROGEN_OXIDASE"/>
    <property type="match status" value="1"/>
</dbReference>
<organism>
    <name type="scientific">Salmonella typhi</name>
    <dbReference type="NCBI Taxonomy" id="90370"/>
    <lineage>
        <taxon>Bacteria</taxon>
        <taxon>Pseudomonadati</taxon>
        <taxon>Pseudomonadota</taxon>
        <taxon>Gammaproteobacteria</taxon>
        <taxon>Enterobacterales</taxon>
        <taxon>Enterobacteriaceae</taxon>
        <taxon>Salmonella</taxon>
    </lineage>
</organism>
<name>HEM6_SALTI</name>